<dbReference type="EC" id="6.3.3.1"/>
<dbReference type="EMBL" id="L12457">
    <property type="protein sequence ID" value="AAC37341.1"/>
    <property type="status" value="ALT_FRAME"/>
    <property type="molecule type" value="Unassigned_DNA"/>
</dbReference>
<dbReference type="EMBL" id="AL049655">
    <property type="protein sequence ID" value="CAB41083.1"/>
    <property type="molecule type" value="Genomic_DNA"/>
</dbReference>
<dbReference type="EMBL" id="AL132970">
    <property type="protein sequence ID" value="CAB82696.1"/>
    <property type="molecule type" value="Genomic_DNA"/>
</dbReference>
<dbReference type="EMBL" id="CP002686">
    <property type="protein sequence ID" value="AEE79327.1"/>
    <property type="molecule type" value="Genomic_DNA"/>
</dbReference>
<dbReference type="EMBL" id="CP002686">
    <property type="protein sequence ID" value="AEE79328.1"/>
    <property type="molecule type" value="Genomic_DNA"/>
</dbReference>
<dbReference type="EMBL" id="AY060585">
    <property type="protein sequence ID" value="AAL31210.1"/>
    <property type="molecule type" value="mRNA"/>
</dbReference>
<dbReference type="EMBL" id="AY142054">
    <property type="protein sequence ID" value="AAM98318.1"/>
    <property type="molecule type" value="mRNA"/>
</dbReference>
<dbReference type="PIR" id="JQ2256">
    <property type="entry name" value="JQ2256"/>
</dbReference>
<dbReference type="PIR" id="T47640">
    <property type="entry name" value="T47640"/>
</dbReference>
<dbReference type="RefSeq" id="NP_191061.1">
    <property type="nucleotide sequence ID" value="NM_115359.3"/>
</dbReference>
<dbReference type="RefSeq" id="NP_974437.1">
    <property type="nucleotide sequence ID" value="NM_202708.2"/>
</dbReference>
<dbReference type="SMR" id="Q05728"/>
<dbReference type="BioGRID" id="9983">
    <property type="interactions" value="2"/>
</dbReference>
<dbReference type="FunCoup" id="Q05728">
    <property type="interactions" value="625"/>
</dbReference>
<dbReference type="IntAct" id="Q05728">
    <property type="interactions" value="1"/>
</dbReference>
<dbReference type="STRING" id="3702.Q05728"/>
<dbReference type="PaxDb" id="3702-AT3G55010.2"/>
<dbReference type="ProteomicsDB" id="226000"/>
<dbReference type="EnsemblPlants" id="AT3G55010.1">
    <property type="protein sequence ID" value="AT3G55010.1"/>
    <property type="gene ID" value="AT3G55010"/>
</dbReference>
<dbReference type="EnsemblPlants" id="AT3G55010.2">
    <property type="protein sequence ID" value="AT3G55010.2"/>
    <property type="gene ID" value="AT3G55010"/>
</dbReference>
<dbReference type="GeneID" id="824667"/>
<dbReference type="Gramene" id="AT3G55010.1">
    <property type="protein sequence ID" value="AT3G55010.1"/>
    <property type="gene ID" value="AT3G55010"/>
</dbReference>
<dbReference type="Gramene" id="AT3G55010.2">
    <property type="protein sequence ID" value="AT3G55010.2"/>
    <property type="gene ID" value="AT3G55010"/>
</dbReference>
<dbReference type="KEGG" id="ath:AT3G55010"/>
<dbReference type="Araport" id="AT3G55010"/>
<dbReference type="TAIR" id="AT3G55010">
    <property type="gene designation" value="PUR5"/>
</dbReference>
<dbReference type="eggNOG" id="KOG0237">
    <property type="taxonomic scope" value="Eukaryota"/>
</dbReference>
<dbReference type="HOGENOM" id="CLU_047116_0_0_1"/>
<dbReference type="InParanoid" id="Q05728"/>
<dbReference type="OMA" id="MTDYICV"/>
<dbReference type="PhylomeDB" id="Q05728"/>
<dbReference type="BioCyc" id="ARA:AT3G55010-MONOMER"/>
<dbReference type="UniPathway" id="UPA00074">
    <property type="reaction ID" value="UER00129"/>
</dbReference>
<dbReference type="PRO" id="PR:Q05728"/>
<dbReference type="Proteomes" id="UP000006548">
    <property type="component" value="Chromosome 3"/>
</dbReference>
<dbReference type="ExpressionAtlas" id="Q05728">
    <property type="expression patterns" value="baseline and differential"/>
</dbReference>
<dbReference type="GO" id="GO:0009507">
    <property type="term" value="C:chloroplast"/>
    <property type="evidence" value="ECO:0007005"/>
    <property type="project" value="TAIR"/>
</dbReference>
<dbReference type="GO" id="GO:0009570">
    <property type="term" value="C:chloroplast stroma"/>
    <property type="evidence" value="ECO:0007005"/>
    <property type="project" value="TAIR"/>
</dbReference>
<dbReference type="GO" id="GO:0005739">
    <property type="term" value="C:mitochondrion"/>
    <property type="evidence" value="ECO:0007005"/>
    <property type="project" value="TAIR"/>
</dbReference>
<dbReference type="GO" id="GO:0005524">
    <property type="term" value="F:ATP binding"/>
    <property type="evidence" value="ECO:0007005"/>
    <property type="project" value="TAIR"/>
</dbReference>
<dbReference type="GO" id="GO:0005507">
    <property type="term" value="F:copper ion binding"/>
    <property type="evidence" value="ECO:0007005"/>
    <property type="project" value="TAIR"/>
</dbReference>
<dbReference type="GO" id="GO:0004641">
    <property type="term" value="F:phosphoribosylformylglycinamidine cyclo-ligase activity"/>
    <property type="evidence" value="ECO:0007669"/>
    <property type="project" value="UniProtKB-EC"/>
</dbReference>
<dbReference type="GO" id="GO:0006189">
    <property type="term" value="P:'de novo' IMP biosynthetic process"/>
    <property type="evidence" value="ECO:0007669"/>
    <property type="project" value="UniProtKB-UniPathway"/>
</dbReference>
<dbReference type="CDD" id="cd02196">
    <property type="entry name" value="PurM"/>
    <property type="match status" value="1"/>
</dbReference>
<dbReference type="FunFam" id="3.30.1330.10:FF:000001">
    <property type="entry name" value="Phosphoribosylformylglycinamidine cyclo-ligase"/>
    <property type="match status" value="1"/>
</dbReference>
<dbReference type="FunFam" id="3.90.650.10:FF:000001">
    <property type="entry name" value="Phosphoribosylformylglycinamidine cyclo-ligase"/>
    <property type="match status" value="1"/>
</dbReference>
<dbReference type="Gene3D" id="3.90.650.10">
    <property type="entry name" value="PurM-like C-terminal domain"/>
    <property type="match status" value="1"/>
</dbReference>
<dbReference type="Gene3D" id="3.30.1330.10">
    <property type="entry name" value="PurM-like, N-terminal domain"/>
    <property type="match status" value="1"/>
</dbReference>
<dbReference type="HAMAP" id="MF_00741">
    <property type="entry name" value="AIRS"/>
    <property type="match status" value="1"/>
</dbReference>
<dbReference type="InterPro" id="IPR010918">
    <property type="entry name" value="PurM-like_C_dom"/>
</dbReference>
<dbReference type="InterPro" id="IPR036676">
    <property type="entry name" value="PurM-like_C_sf"/>
</dbReference>
<dbReference type="InterPro" id="IPR016188">
    <property type="entry name" value="PurM-like_N"/>
</dbReference>
<dbReference type="InterPro" id="IPR036921">
    <property type="entry name" value="PurM-like_N_sf"/>
</dbReference>
<dbReference type="InterPro" id="IPR004733">
    <property type="entry name" value="PurM_cligase"/>
</dbReference>
<dbReference type="NCBIfam" id="TIGR00878">
    <property type="entry name" value="purM"/>
    <property type="match status" value="1"/>
</dbReference>
<dbReference type="PANTHER" id="PTHR10520:SF12">
    <property type="entry name" value="TRIFUNCTIONAL PURINE BIOSYNTHETIC PROTEIN ADENOSINE-3"/>
    <property type="match status" value="1"/>
</dbReference>
<dbReference type="PANTHER" id="PTHR10520">
    <property type="entry name" value="TRIFUNCTIONAL PURINE BIOSYNTHETIC PROTEIN ADENOSINE-3-RELATED"/>
    <property type="match status" value="1"/>
</dbReference>
<dbReference type="Pfam" id="PF00586">
    <property type="entry name" value="AIRS"/>
    <property type="match status" value="1"/>
</dbReference>
<dbReference type="Pfam" id="PF02769">
    <property type="entry name" value="AIRS_C"/>
    <property type="match status" value="1"/>
</dbReference>
<dbReference type="SUPFAM" id="SSF56042">
    <property type="entry name" value="PurM C-terminal domain-like"/>
    <property type="match status" value="1"/>
</dbReference>
<dbReference type="SUPFAM" id="SSF55326">
    <property type="entry name" value="PurM N-terminal domain-like"/>
    <property type="match status" value="1"/>
</dbReference>
<gene>
    <name type="primary">PUR5</name>
    <name type="ordered locus">At3g55010</name>
    <name type="ORF">F28P10.10</name>
    <name type="ORF">T15C9.10</name>
</gene>
<evidence type="ECO:0000255" key="1"/>
<evidence type="ECO:0000256" key="2">
    <source>
        <dbReference type="SAM" id="MobiDB-lite"/>
    </source>
</evidence>
<evidence type="ECO:0000305" key="3"/>
<organism>
    <name type="scientific">Arabidopsis thaliana</name>
    <name type="common">Mouse-ear cress</name>
    <dbReference type="NCBI Taxonomy" id="3702"/>
    <lineage>
        <taxon>Eukaryota</taxon>
        <taxon>Viridiplantae</taxon>
        <taxon>Streptophyta</taxon>
        <taxon>Embryophyta</taxon>
        <taxon>Tracheophyta</taxon>
        <taxon>Spermatophyta</taxon>
        <taxon>Magnoliopsida</taxon>
        <taxon>eudicotyledons</taxon>
        <taxon>Gunneridae</taxon>
        <taxon>Pentapetalae</taxon>
        <taxon>rosids</taxon>
        <taxon>malvids</taxon>
        <taxon>Brassicales</taxon>
        <taxon>Brassicaceae</taxon>
        <taxon>Camelineae</taxon>
        <taxon>Arabidopsis</taxon>
    </lineage>
</organism>
<feature type="transit peptide" description="Chloroplast" evidence="1">
    <location>
        <begin position="1"/>
        <end position="58"/>
    </location>
</feature>
<feature type="chain" id="PRO_0000029881" description="Phosphoribosylformylglycinamidine cyclo-ligase, chloroplastic">
    <location>
        <begin position="59"/>
        <end position="389"/>
    </location>
</feature>
<feature type="region of interest" description="Disordered" evidence="2">
    <location>
        <begin position="46"/>
        <end position="65"/>
    </location>
</feature>
<accession>Q05728</accession>
<accession>Q9M2W5</accession>
<accession>Q9SV49</accession>
<name>PUR5_ARATH</name>
<sequence length="389" mass="41504">MEARILQSSSSCYSSLYAVNRSRFSSVSSPKPFSVSFAQTTRTRTRVLSMSKKDGRTDKDDDTDSLNYKDSGVDIDAGAELVKRIAKMAPGIGGFGGLFPLGDSYLVAGTDGVGTKLKLAFETGIHDTIGIDLVAMSVNDIITSGAKPLFFLDYFATSRLDVDLAEKVIKGIVEGCRQSECALLGGETAEMPDFYAEGEYDLSGFAVGIVKKTSVINGKNIVAGDVLIGLPSSGVHSNGFSLVRRVLARSNLSLKDALPGGSSTLGDALMAPTVIYVKQVLDMIEKGGVKGLAHITGGGFTDNIPRVFPDGLGAVIHTDAWELPPLFKWIQQTGRIEDSEMRRTFNLGIGMVMVVSPEAASRILEEVKNGDYVAYRVGEVVNGEGVSYQ</sequence>
<protein>
    <recommendedName>
        <fullName>Phosphoribosylformylglycinamidine cyclo-ligase, chloroplastic</fullName>
        <ecNumber>6.3.3.1</ecNumber>
    </recommendedName>
    <alternativeName>
        <fullName>AIR synthase</fullName>
        <shortName>AIRS</shortName>
    </alternativeName>
    <alternativeName>
        <fullName>Phosphoribosyl-aminoimidazole synthetase</fullName>
    </alternativeName>
</protein>
<reference key="1">
    <citation type="journal article" date="1993" name="Plant Physiol.">
        <title>Isolating the Arabidopsis thaliana genes for de novo purine synthesis by suppression of Escherichia coli mutants. I. 5'-Phosphoribosyl-5-aminoimidazole synthetase.</title>
        <authorList>
            <person name="Senecoff J.F."/>
            <person name="Meagher R.B."/>
        </authorList>
    </citation>
    <scope>NUCLEOTIDE SEQUENCE</scope>
    <source>
        <strain>cv. Columbia</strain>
        <tissue>Leaf</tissue>
        <tissue>Stem</tissue>
    </source>
</reference>
<reference key="2">
    <citation type="journal article" date="2000" name="Nature">
        <title>Sequence and analysis of chromosome 3 of the plant Arabidopsis thaliana.</title>
        <authorList>
            <person name="Salanoubat M."/>
            <person name="Lemcke K."/>
            <person name="Rieger M."/>
            <person name="Ansorge W."/>
            <person name="Unseld M."/>
            <person name="Fartmann B."/>
            <person name="Valle G."/>
            <person name="Bloecker H."/>
            <person name="Perez-Alonso M."/>
            <person name="Obermaier B."/>
            <person name="Delseny M."/>
            <person name="Boutry M."/>
            <person name="Grivell L.A."/>
            <person name="Mache R."/>
            <person name="Puigdomenech P."/>
            <person name="De Simone V."/>
            <person name="Choisne N."/>
            <person name="Artiguenave F."/>
            <person name="Robert C."/>
            <person name="Brottier P."/>
            <person name="Wincker P."/>
            <person name="Cattolico L."/>
            <person name="Weissenbach J."/>
            <person name="Saurin W."/>
            <person name="Quetier F."/>
            <person name="Schaefer M."/>
            <person name="Mueller-Auer S."/>
            <person name="Gabel C."/>
            <person name="Fuchs M."/>
            <person name="Benes V."/>
            <person name="Wurmbach E."/>
            <person name="Drzonek H."/>
            <person name="Erfle H."/>
            <person name="Jordan N."/>
            <person name="Bangert S."/>
            <person name="Wiedelmann R."/>
            <person name="Kranz H."/>
            <person name="Voss H."/>
            <person name="Holland R."/>
            <person name="Brandt P."/>
            <person name="Nyakatura G."/>
            <person name="Vezzi A."/>
            <person name="D'Angelo M."/>
            <person name="Pallavicini A."/>
            <person name="Toppo S."/>
            <person name="Simionati B."/>
            <person name="Conrad A."/>
            <person name="Hornischer K."/>
            <person name="Kauer G."/>
            <person name="Loehnert T.-H."/>
            <person name="Nordsiek G."/>
            <person name="Reichelt J."/>
            <person name="Scharfe M."/>
            <person name="Schoen O."/>
            <person name="Bargues M."/>
            <person name="Terol J."/>
            <person name="Climent J."/>
            <person name="Navarro P."/>
            <person name="Collado C."/>
            <person name="Perez-Perez A."/>
            <person name="Ottenwaelder B."/>
            <person name="Duchemin D."/>
            <person name="Cooke R."/>
            <person name="Laudie M."/>
            <person name="Berger-Llauro C."/>
            <person name="Purnelle B."/>
            <person name="Masuy D."/>
            <person name="de Haan M."/>
            <person name="Maarse A.C."/>
            <person name="Alcaraz J.-P."/>
            <person name="Cottet A."/>
            <person name="Casacuberta E."/>
            <person name="Monfort A."/>
            <person name="Argiriou A."/>
            <person name="Flores M."/>
            <person name="Liguori R."/>
            <person name="Vitale D."/>
            <person name="Mannhaupt G."/>
            <person name="Haase D."/>
            <person name="Schoof H."/>
            <person name="Rudd S."/>
            <person name="Zaccaria P."/>
            <person name="Mewes H.-W."/>
            <person name="Mayer K.F.X."/>
            <person name="Kaul S."/>
            <person name="Town C.D."/>
            <person name="Koo H.L."/>
            <person name="Tallon L.J."/>
            <person name="Jenkins J."/>
            <person name="Rooney T."/>
            <person name="Rizzo M."/>
            <person name="Walts A."/>
            <person name="Utterback T."/>
            <person name="Fujii C.Y."/>
            <person name="Shea T.P."/>
            <person name="Creasy T.H."/>
            <person name="Haas B."/>
            <person name="Maiti R."/>
            <person name="Wu D."/>
            <person name="Peterson J."/>
            <person name="Van Aken S."/>
            <person name="Pai G."/>
            <person name="Militscher J."/>
            <person name="Sellers P."/>
            <person name="Gill J.E."/>
            <person name="Feldblyum T.V."/>
            <person name="Preuss D."/>
            <person name="Lin X."/>
            <person name="Nierman W.C."/>
            <person name="Salzberg S.L."/>
            <person name="White O."/>
            <person name="Venter J.C."/>
            <person name="Fraser C.M."/>
            <person name="Kaneko T."/>
            <person name="Nakamura Y."/>
            <person name="Sato S."/>
            <person name="Kato T."/>
            <person name="Asamizu E."/>
            <person name="Sasamoto S."/>
            <person name="Kimura T."/>
            <person name="Idesawa K."/>
            <person name="Kawashima K."/>
            <person name="Kishida Y."/>
            <person name="Kiyokawa C."/>
            <person name="Kohara M."/>
            <person name="Matsumoto M."/>
            <person name="Matsuno A."/>
            <person name="Muraki A."/>
            <person name="Nakayama S."/>
            <person name="Nakazaki N."/>
            <person name="Shinpo S."/>
            <person name="Takeuchi C."/>
            <person name="Wada T."/>
            <person name="Watanabe A."/>
            <person name="Yamada M."/>
            <person name="Yasuda M."/>
            <person name="Tabata S."/>
        </authorList>
    </citation>
    <scope>NUCLEOTIDE SEQUENCE [LARGE SCALE GENOMIC DNA]</scope>
    <source>
        <strain>cv. Columbia</strain>
    </source>
</reference>
<reference key="3">
    <citation type="journal article" date="2017" name="Plant J.">
        <title>Araport11: a complete reannotation of the Arabidopsis thaliana reference genome.</title>
        <authorList>
            <person name="Cheng C.Y."/>
            <person name="Krishnakumar V."/>
            <person name="Chan A.P."/>
            <person name="Thibaud-Nissen F."/>
            <person name="Schobel S."/>
            <person name="Town C.D."/>
        </authorList>
    </citation>
    <scope>GENOME REANNOTATION</scope>
    <source>
        <strain>cv. Columbia</strain>
    </source>
</reference>
<reference key="4">
    <citation type="journal article" date="2003" name="Science">
        <title>Empirical analysis of transcriptional activity in the Arabidopsis genome.</title>
        <authorList>
            <person name="Yamada K."/>
            <person name="Lim J."/>
            <person name="Dale J.M."/>
            <person name="Chen H."/>
            <person name="Shinn P."/>
            <person name="Palm C.J."/>
            <person name="Southwick A.M."/>
            <person name="Wu H.C."/>
            <person name="Kim C.J."/>
            <person name="Nguyen M."/>
            <person name="Pham P.K."/>
            <person name="Cheuk R.F."/>
            <person name="Karlin-Newmann G."/>
            <person name="Liu S.X."/>
            <person name="Lam B."/>
            <person name="Sakano H."/>
            <person name="Wu T."/>
            <person name="Yu G."/>
            <person name="Miranda M."/>
            <person name="Quach H.L."/>
            <person name="Tripp M."/>
            <person name="Chang C.H."/>
            <person name="Lee J.M."/>
            <person name="Toriumi M.J."/>
            <person name="Chan M.M."/>
            <person name="Tang C.C."/>
            <person name="Onodera C.S."/>
            <person name="Deng J.M."/>
            <person name="Akiyama K."/>
            <person name="Ansari Y."/>
            <person name="Arakawa T."/>
            <person name="Banh J."/>
            <person name="Banno F."/>
            <person name="Bowser L."/>
            <person name="Brooks S.Y."/>
            <person name="Carninci P."/>
            <person name="Chao Q."/>
            <person name="Choy N."/>
            <person name="Enju A."/>
            <person name="Goldsmith A.D."/>
            <person name="Gurjal M."/>
            <person name="Hansen N.F."/>
            <person name="Hayashizaki Y."/>
            <person name="Johnson-Hopson C."/>
            <person name="Hsuan V.W."/>
            <person name="Iida K."/>
            <person name="Karnes M."/>
            <person name="Khan S."/>
            <person name="Koesema E."/>
            <person name="Ishida J."/>
            <person name="Jiang P.X."/>
            <person name="Jones T."/>
            <person name="Kawai J."/>
            <person name="Kamiya A."/>
            <person name="Meyers C."/>
            <person name="Nakajima M."/>
            <person name="Narusaka M."/>
            <person name="Seki M."/>
            <person name="Sakurai T."/>
            <person name="Satou M."/>
            <person name="Tamse R."/>
            <person name="Vaysberg M."/>
            <person name="Wallender E.K."/>
            <person name="Wong C."/>
            <person name="Yamamura Y."/>
            <person name="Yuan S."/>
            <person name="Shinozaki K."/>
            <person name="Davis R.W."/>
            <person name="Theologis A."/>
            <person name="Ecker J.R."/>
        </authorList>
    </citation>
    <scope>NUCLEOTIDE SEQUENCE [LARGE SCALE MRNA]</scope>
    <source>
        <strain>cv. Columbia</strain>
    </source>
</reference>
<reference key="5">
    <citation type="journal article" date="2009" name="J. Proteomics">
        <title>Phosphoproteomic analysis of nuclei-enriched fractions from Arabidopsis thaliana.</title>
        <authorList>
            <person name="Jones A.M.E."/>
            <person name="MacLean D."/>
            <person name="Studholme D.J."/>
            <person name="Serna-Sanz A."/>
            <person name="Andreasson E."/>
            <person name="Rathjen J.P."/>
            <person name="Peck S.C."/>
        </authorList>
    </citation>
    <scope>IDENTIFICATION BY MASS SPECTROMETRY [LARGE SCALE ANALYSIS]</scope>
    <source>
        <strain>cv. Columbia</strain>
    </source>
</reference>
<comment type="catalytic activity">
    <reaction>
        <text>2-formamido-N(1)-(5-O-phospho-beta-D-ribosyl)acetamidine + ATP = 5-amino-1-(5-phospho-beta-D-ribosyl)imidazole + ADP + phosphate + H(+)</text>
        <dbReference type="Rhea" id="RHEA:23032"/>
        <dbReference type="ChEBI" id="CHEBI:15378"/>
        <dbReference type="ChEBI" id="CHEBI:30616"/>
        <dbReference type="ChEBI" id="CHEBI:43474"/>
        <dbReference type="ChEBI" id="CHEBI:137981"/>
        <dbReference type="ChEBI" id="CHEBI:147287"/>
        <dbReference type="ChEBI" id="CHEBI:456216"/>
        <dbReference type="EC" id="6.3.3.1"/>
    </reaction>
</comment>
<comment type="pathway">
    <text>Purine metabolism; IMP biosynthesis via de novo pathway; 5-amino-1-(5-phospho-D-ribosyl)imidazole from N(2)-formyl-N(1)-(5-phospho-D-ribosyl)glycinamide: step 2/2.</text>
</comment>
<comment type="subcellular location">
    <subcellularLocation>
        <location>Plastid</location>
        <location>Chloroplast</location>
    </subcellularLocation>
</comment>
<comment type="similarity">
    <text evidence="3">Belongs to the AIR synthase family.</text>
</comment>
<comment type="sequence caution" evidence="3">
    <conflict type="frameshift">
        <sequence resource="EMBL-CDS" id="AAC37341"/>
    </conflict>
</comment>
<keyword id="KW-0067">ATP-binding</keyword>
<keyword id="KW-0150">Chloroplast</keyword>
<keyword id="KW-0436">Ligase</keyword>
<keyword id="KW-0547">Nucleotide-binding</keyword>
<keyword id="KW-0934">Plastid</keyword>
<keyword id="KW-0658">Purine biosynthesis</keyword>
<keyword id="KW-1185">Reference proteome</keyword>
<keyword id="KW-0809">Transit peptide</keyword>
<proteinExistence type="evidence at protein level"/>